<organism>
    <name type="scientific">Yersinia pestis bv. Antiqua (strain Angola)</name>
    <dbReference type="NCBI Taxonomy" id="349746"/>
    <lineage>
        <taxon>Bacteria</taxon>
        <taxon>Pseudomonadati</taxon>
        <taxon>Pseudomonadota</taxon>
        <taxon>Gammaproteobacteria</taxon>
        <taxon>Enterobacterales</taxon>
        <taxon>Yersiniaceae</taxon>
        <taxon>Yersinia</taxon>
    </lineage>
</organism>
<protein>
    <recommendedName>
        <fullName evidence="1">5-oxoprolinase subunit A</fullName>
        <shortName evidence="1">5-OPase subunit A</shortName>
        <ecNumber evidence="1">3.5.2.9</ecNumber>
    </recommendedName>
    <alternativeName>
        <fullName evidence="1">5-oxoprolinase (ATP-hydrolyzing) subunit A</fullName>
    </alternativeName>
</protein>
<reference key="1">
    <citation type="journal article" date="2010" name="J. Bacteriol.">
        <title>Genome sequence of the deep-rooted Yersinia pestis strain Angola reveals new insights into the evolution and pangenome of the plague bacterium.</title>
        <authorList>
            <person name="Eppinger M."/>
            <person name="Worsham P.L."/>
            <person name="Nikolich M.P."/>
            <person name="Riley D.R."/>
            <person name="Sebastian Y."/>
            <person name="Mou S."/>
            <person name="Achtman M."/>
            <person name="Lindler L.E."/>
            <person name="Ravel J."/>
        </authorList>
    </citation>
    <scope>NUCLEOTIDE SEQUENCE [LARGE SCALE GENOMIC DNA]</scope>
    <source>
        <strain>Angola</strain>
    </source>
</reference>
<comment type="function">
    <text evidence="1">Catalyzes the cleavage of 5-oxoproline to form L-glutamate coupled to the hydrolysis of ATP to ADP and inorganic phosphate.</text>
</comment>
<comment type="catalytic activity">
    <reaction evidence="1">
        <text>5-oxo-L-proline + ATP + 2 H2O = L-glutamate + ADP + phosphate + H(+)</text>
        <dbReference type="Rhea" id="RHEA:10348"/>
        <dbReference type="ChEBI" id="CHEBI:15377"/>
        <dbReference type="ChEBI" id="CHEBI:15378"/>
        <dbReference type="ChEBI" id="CHEBI:29985"/>
        <dbReference type="ChEBI" id="CHEBI:30616"/>
        <dbReference type="ChEBI" id="CHEBI:43474"/>
        <dbReference type="ChEBI" id="CHEBI:58402"/>
        <dbReference type="ChEBI" id="CHEBI:456216"/>
        <dbReference type="EC" id="3.5.2.9"/>
    </reaction>
</comment>
<comment type="subunit">
    <text evidence="1">Forms a complex composed of PxpA, PxpB and PxpC.</text>
</comment>
<comment type="similarity">
    <text evidence="1">Belongs to the LamB/PxpA family.</text>
</comment>
<name>PXPA_YERPG</name>
<gene>
    <name evidence="1" type="primary">pxpA</name>
    <name type="ordered locus">YpAngola_A3591</name>
</gene>
<evidence type="ECO:0000255" key="1">
    <source>
        <dbReference type="HAMAP-Rule" id="MF_00691"/>
    </source>
</evidence>
<sequence>MKIDLNADLGEGCANDQALLQLVSSANIACGFHAGDAQTMRQSVRWALEYGVAIGAHPSFPDRENFGRTAMQLPPETVYAQVVYQLGALAAIVQVEGGVMQHVKPHGMLYNQAAVDPLLADAIAQAVKAVDPSLRLVGLAGSELIRAGTRVGLVTRQEVFADRHYQPDGTLVPRSQPDALIESDELALSQTLAMVQQHQVQACDGSWVQVQADTVCVHGDGVQALAFARCLRDRFQQEGISVIAQ</sequence>
<proteinExistence type="inferred from homology"/>
<dbReference type="EC" id="3.5.2.9" evidence="1"/>
<dbReference type="EMBL" id="CP000901">
    <property type="protein sequence ID" value="ABX86117.1"/>
    <property type="molecule type" value="Genomic_DNA"/>
</dbReference>
<dbReference type="RefSeq" id="WP_002209659.1">
    <property type="nucleotide sequence ID" value="NZ_CP009935.1"/>
</dbReference>
<dbReference type="SMR" id="A9R3Y2"/>
<dbReference type="GeneID" id="57975991"/>
<dbReference type="KEGG" id="ypg:YpAngola_A3591"/>
<dbReference type="PATRIC" id="fig|349746.12.peg.290"/>
<dbReference type="GO" id="GO:0017168">
    <property type="term" value="F:5-oxoprolinase (ATP-hydrolyzing) activity"/>
    <property type="evidence" value="ECO:0007669"/>
    <property type="project" value="UniProtKB-UniRule"/>
</dbReference>
<dbReference type="GO" id="GO:0005524">
    <property type="term" value="F:ATP binding"/>
    <property type="evidence" value="ECO:0007669"/>
    <property type="project" value="UniProtKB-UniRule"/>
</dbReference>
<dbReference type="GO" id="GO:0005975">
    <property type="term" value="P:carbohydrate metabolic process"/>
    <property type="evidence" value="ECO:0007669"/>
    <property type="project" value="InterPro"/>
</dbReference>
<dbReference type="CDD" id="cd10800">
    <property type="entry name" value="LamB_YcsF_YbgL_like"/>
    <property type="match status" value="1"/>
</dbReference>
<dbReference type="Gene3D" id="3.20.20.370">
    <property type="entry name" value="Glycoside hydrolase/deacetylase"/>
    <property type="match status" value="1"/>
</dbReference>
<dbReference type="HAMAP" id="MF_00691">
    <property type="entry name" value="PxpA"/>
    <property type="match status" value="1"/>
</dbReference>
<dbReference type="InterPro" id="IPR011330">
    <property type="entry name" value="Glyco_hydro/deAcase_b/a-brl"/>
</dbReference>
<dbReference type="InterPro" id="IPR005501">
    <property type="entry name" value="LamB/YcsF/PxpA-like"/>
</dbReference>
<dbReference type="NCBIfam" id="NF003812">
    <property type="entry name" value="PRK05406.1-1"/>
    <property type="match status" value="1"/>
</dbReference>
<dbReference type="NCBIfam" id="NF003814">
    <property type="entry name" value="PRK05406.1-3"/>
    <property type="match status" value="1"/>
</dbReference>
<dbReference type="NCBIfam" id="NF003815">
    <property type="entry name" value="PRK05406.1-4"/>
    <property type="match status" value="1"/>
</dbReference>
<dbReference type="NCBIfam" id="NF003816">
    <property type="entry name" value="PRK05406.1-5"/>
    <property type="match status" value="1"/>
</dbReference>
<dbReference type="PANTHER" id="PTHR30292:SF0">
    <property type="entry name" value="5-OXOPROLINASE SUBUNIT A"/>
    <property type="match status" value="1"/>
</dbReference>
<dbReference type="PANTHER" id="PTHR30292">
    <property type="entry name" value="UNCHARACTERIZED PROTEIN YBGL-RELATED"/>
    <property type="match status" value="1"/>
</dbReference>
<dbReference type="Pfam" id="PF03746">
    <property type="entry name" value="LamB_YcsF"/>
    <property type="match status" value="1"/>
</dbReference>
<dbReference type="SUPFAM" id="SSF88713">
    <property type="entry name" value="Glycoside hydrolase/deacetylase"/>
    <property type="match status" value="1"/>
</dbReference>
<accession>A9R3Y2</accession>
<feature type="chain" id="PRO_1000132080" description="5-oxoprolinase subunit A">
    <location>
        <begin position="1"/>
        <end position="245"/>
    </location>
</feature>
<keyword id="KW-0067">ATP-binding</keyword>
<keyword id="KW-0378">Hydrolase</keyword>
<keyword id="KW-0547">Nucleotide-binding</keyword>